<sequence length="281" mass="31377">MNDTQNPLHGAEASPLGKPVAYRDTYAPELLFPIARQLKRDEIGVRADALPFCGEDLWNAYELSWLNPRGKPVVALAEFRVPADTPRLVESKSLKLYLNSFNQSRFDDAAAVRMAIARDLSAAAGGAVGVAVWPLGGQAERRFAAPEGVCIDDLDVAIDTYQPDPTLLSAGDEVVSETLYSHLLKTNCLVTGQPDWGMVAVRYTGPRIDRAGLLRYIVSFREHNEFHEQCVERVFCDITARCRPQRLAVWARYTRRGGLDINPFRASDRDQRADEAMEIRQ</sequence>
<reference key="1">
    <citation type="journal article" date="2006" name="Nat. Biotechnol.">
        <title>Complete genome of the mutualistic, N2-fixing grass endophyte Azoarcus sp. strain BH72.</title>
        <authorList>
            <person name="Krause A."/>
            <person name="Ramakumar A."/>
            <person name="Bartels D."/>
            <person name="Battistoni F."/>
            <person name="Bekel T."/>
            <person name="Boch J."/>
            <person name="Boehm M."/>
            <person name="Friedrich F."/>
            <person name="Hurek T."/>
            <person name="Krause L."/>
            <person name="Linke B."/>
            <person name="McHardy A.C."/>
            <person name="Sarkar A."/>
            <person name="Schneiker S."/>
            <person name="Syed A.A."/>
            <person name="Thauer R."/>
            <person name="Vorhoelter F.-J."/>
            <person name="Weidner S."/>
            <person name="Puehler A."/>
            <person name="Reinhold-Hurek B."/>
            <person name="Kaiser O."/>
            <person name="Goesmann A."/>
        </authorList>
    </citation>
    <scope>NUCLEOTIDE SEQUENCE [LARGE SCALE GENOMIC DNA]</scope>
    <source>
        <strain>BH72</strain>
    </source>
</reference>
<name>QUEF_AZOSB</name>
<gene>
    <name evidence="1" type="primary">queF</name>
    <name type="ordered locus">azo3509</name>
</gene>
<proteinExistence type="inferred from homology"/>
<evidence type="ECO:0000255" key="1">
    <source>
        <dbReference type="HAMAP-Rule" id="MF_00817"/>
    </source>
</evidence>
<accession>A1KBB9</accession>
<feature type="chain" id="PRO_1000072869" description="NADPH-dependent 7-cyano-7-deazaguanine reductase">
    <location>
        <begin position="1"/>
        <end position="281"/>
    </location>
</feature>
<feature type="active site" description="Thioimide intermediate" evidence="1">
    <location>
        <position position="188"/>
    </location>
</feature>
<feature type="active site" description="Proton donor" evidence="1">
    <location>
        <position position="195"/>
    </location>
</feature>
<feature type="binding site" evidence="1">
    <location>
        <begin position="89"/>
        <end position="91"/>
    </location>
    <ligand>
        <name>substrate</name>
    </ligand>
</feature>
<feature type="binding site" evidence="1">
    <location>
        <begin position="91"/>
        <end position="92"/>
    </location>
    <ligand>
        <name>NADPH</name>
        <dbReference type="ChEBI" id="CHEBI:57783"/>
    </ligand>
</feature>
<feature type="binding site" evidence="1">
    <location>
        <begin position="227"/>
        <end position="228"/>
    </location>
    <ligand>
        <name>substrate</name>
    </ligand>
</feature>
<feature type="binding site" evidence="1">
    <location>
        <begin position="256"/>
        <end position="257"/>
    </location>
    <ligand>
        <name>NADPH</name>
        <dbReference type="ChEBI" id="CHEBI:57783"/>
    </ligand>
</feature>
<comment type="function">
    <text evidence="1">Catalyzes the NADPH-dependent reduction of 7-cyano-7-deazaguanine (preQ0) to 7-aminomethyl-7-deazaguanine (preQ1).</text>
</comment>
<comment type="catalytic activity">
    <reaction evidence="1">
        <text>7-aminomethyl-7-carbaguanine + 2 NADP(+) = 7-cyano-7-deazaguanine + 2 NADPH + 3 H(+)</text>
        <dbReference type="Rhea" id="RHEA:13409"/>
        <dbReference type="ChEBI" id="CHEBI:15378"/>
        <dbReference type="ChEBI" id="CHEBI:45075"/>
        <dbReference type="ChEBI" id="CHEBI:57783"/>
        <dbReference type="ChEBI" id="CHEBI:58349"/>
        <dbReference type="ChEBI" id="CHEBI:58703"/>
        <dbReference type="EC" id="1.7.1.13"/>
    </reaction>
</comment>
<comment type="pathway">
    <text evidence="1">tRNA modification; tRNA-queuosine biosynthesis.</text>
</comment>
<comment type="subunit">
    <text evidence="1">Homodimer.</text>
</comment>
<comment type="subcellular location">
    <subcellularLocation>
        <location evidence="1">Cytoplasm</location>
    </subcellularLocation>
</comment>
<comment type="similarity">
    <text evidence="1">Belongs to the GTP cyclohydrolase I family. QueF type 2 subfamily.</text>
</comment>
<organism>
    <name type="scientific">Azoarcus sp. (strain BH72)</name>
    <dbReference type="NCBI Taxonomy" id="418699"/>
    <lineage>
        <taxon>Bacteria</taxon>
        <taxon>Pseudomonadati</taxon>
        <taxon>Pseudomonadota</taxon>
        <taxon>Betaproteobacteria</taxon>
        <taxon>Rhodocyclales</taxon>
        <taxon>Zoogloeaceae</taxon>
        <taxon>Azoarcus</taxon>
    </lineage>
</organism>
<keyword id="KW-0963">Cytoplasm</keyword>
<keyword id="KW-0521">NADP</keyword>
<keyword id="KW-0560">Oxidoreductase</keyword>
<keyword id="KW-0671">Queuosine biosynthesis</keyword>
<keyword id="KW-1185">Reference proteome</keyword>
<dbReference type="EC" id="1.7.1.13" evidence="1"/>
<dbReference type="EMBL" id="AM406670">
    <property type="protein sequence ID" value="CAL96125.1"/>
    <property type="molecule type" value="Genomic_DNA"/>
</dbReference>
<dbReference type="RefSeq" id="WP_011767231.1">
    <property type="nucleotide sequence ID" value="NC_008702.1"/>
</dbReference>
<dbReference type="SMR" id="A1KBB9"/>
<dbReference type="STRING" id="62928.azo3509"/>
<dbReference type="KEGG" id="azo:azo3509"/>
<dbReference type="eggNOG" id="COG0780">
    <property type="taxonomic scope" value="Bacteria"/>
</dbReference>
<dbReference type="eggNOG" id="COG2904">
    <property type="taxonomic scope" value="Bacteria"/>
</dbReference>
<dbReference type="HOGENOM" id="CLU_054738_0_0_4"/>
<dbReference type="UniPathway" id="UPA00392"/>
<dbReference type="Proteomes" id="UP000002588">
    <property type="component" value="Chromosome"/>
</dbReference>
<dbReference type="GO" id="GO:0005737">
    <property type="term" value="C:cytoplasm"/>
    <property type="evidence" value="ECO:0007669"/>
    <property type="project" value="UniProtKB-SubCell"/>
</dbReference>
<dbReference type="GO" id="GO:0033739">
    <property type="term" value="F:preQ1 synthase activity"/>
    <property type="evidence" value="ECO:0007669"/>
    <property type="project" value="UniProtKB-UniRule"/>
</dbReference>
<dbReference type="GO" id="GO:0008616">
    <property type="term" value="P:queuosine biosynthetic process"/>
    <property type="evidence" value="ECO:0007669"/>
    <property type="project" value="UniProtKB-UniRule"/>
</dbReference>
<dbReference type="GO" id="GO:0006400">
    <property type="term" value="P:tRNA modification"/>
    <property type="evidence" value="ECO:0007669"/>
    <property type="project" value="UniProtKB-UniRule"/>
</dbReference>
<dbReference type="Gene3D" id="3.30.1130.10">
    <property type="match status" value="2"/>
</dbReference>
<dbReference type="HAMAP" id="MF_00817">
    <property type="entry name" value="QueF_type2"/>
    <property type="match status" value="1"/>
</dbReference>
<dbReference type="InterPro" id="IPR043133">
    <property type="entry name" value="GTP-CH-I_C/QueF"/>
</dbReference>
<dbReference type="InterPro" id="IPR050084">
    <property type="entry name" value="NADPH_dep_7-cyano-7-deazaG_red"/>
</dbReference>
<dbReference type="InterPro" id="IPR029500">
    <property type="entry name" value="QueF"/>
</dbReference>
<dbReference type="InterPro" id="IPR029139">
    <property type="entry name" value="QueF_N"/>
</dbReference>
<dbReference type="InterPro" id="IPR016428">
    <property type="entry name" value="QueF_type2"/>
</dbReference>
<dbReference type="NCBIfam" id="TIGR03138">
    <property type="entry name" value="QueF"/>
    <property type="match status" value="1"/>
</dbReference>
<dbReference type="PANTHER" id="PTHR34354">
    <property type="entry name" value="NADPH-DEPENDENT 7-CYANO-7-DEAZAGUANINE REDUCTASE"/>
    <property type="match status" value="1"/>
</dbReference>
<dbReference type="PANTHER" id="PTHR34354:SF1">
    <property type="entry name" value="NADPH-DEPENDENT 7-CYANO-7-DEAZAGUANINE REDUCTASE"/>
    <property type="match status" value="1"/>
</dbReference>
<dbReference type="Pfam" id="PF14489">
    <property type="entry name" value="QueF"/>
    <property type="match status" value="1"/>
</dbReference>
<dbReference type="Pfam" id="PF14819">
    <property type="entry name" value="QueF_N"/>
    <property type="match status" value="1"/>
</dbReference>
<dbReference type="PIRSF" id="PIRSF004750">
    <property type="entry name" value="Nitrile_oxidored_YqcD_prd"/>
    <property type="match status" value="1"/>
</dbReference>
<dbReference type="SUPFAM" id="SSF55620">
    <property type="entry name" value="Tetrahydrobiopterin biosynthesis enzymes-like"/>
    <property type="match status" value="1"/>
</dbReference>
<protein>
    <recommendedName>
        <fullName evidence="1">NADPH-dependent 7-cyano-7-deazaguanine reductase</fullName>
        <ecNumber evidence="1">1.7.1.13</ecNumber>
    </recommendedName>
    <alternativeName>
        <fullName evidence="1">7-cyano-7-carbaguanine reductase</fullName>
    </alternativeName>
    <alternativeName>
        <fullName evidence="1">NADPH-dependent nitrile oxidoreductase</fullName>
    </alternativeName>
    <alternativeName>
        <fullName evidence="1">PreQ(0) reductase</fullName>
    </alternativeName>
</protein>